<proteinExistence type="evidence at protein level"/>
<gene>
    <name evidence="1" type="primary">menE</name>
    <name type="ordered locus">b2260</name>
    <name type="ordered locus">JW2255</name>
</gene>
<sequence length="451" mass="50185">MIFSDWPWRHWRQVRGETIALRLNDEQLNWRELCARVDELASGFAVQGVVEGSGVMLRAWNTPQTLLAWLALLQCGARVLPVNPQLPQPLLEELLPNLTLQFALVPDGENTFPALTSLHIQLVEGAHAATWQPTRLCSMTLTSGSTGLPKAAVHTYQAHLASAQGVLSLIPFGDHDDWLLSLPLFHVSGQGIMWRWLYAGARMTVRDKQPLEQMLAGCTHASLVPTQLWRLLVNRSSVSLKAVLLGGAAIPVELTEQAREQGIRCFCGYGLTEFASTVCAKEADGLADVGSPLPGREVKIVNNEVWLRAASMAEGYWRNGQLVSLVNDEGWYATRDRGEMHNGKLTIVGRLDNLFFSGGEGIQPEEVERVIAAHPAVLQVFIVPVADKEFGHRPVAVMEYDHESVDLSEWVKDKLARFQQPVRWLTLPPELKNGGIKISRQALKEWVQRQQ</sequence>
<dbReference type="EC" id="6.2.1.26" evidence="1"/>
<dbReference type="EMBL" id="L35031">
    <property type="protein sequence ID" value="AAB04893.1"/>
    <property type="molecule type" value="Genomic_DNA"/>
</dbReference>
<dbReference type="EMBL" id="U00096">
    <property type="protein sequence ID" value="AAC75320.1"/>
    <property type="molecule type" value="Genomic_DNA"/>
</dbReference>
<dbReference type="EMBL" id="AP009048">
    <property type="protein sequence ID" value="BAA16084.1"/>
    <property type="molecule type" value="Genomic_DNA"/>
</dbReference>
<dbReference type="PIR" id="B64997">
    <property type="entry name" value="B64997"/>
</dbReference>
<dbReference type="RefSeq" id="NP_416763.1">
    <property type="nucleotide sequence ID" value="NC_000913.3"/>
</dbReference>
<dbReference type="RefSeq" id="WP_000577625.1">
    <property type="nucleotide sequence ID" value="NZ_LN832404.1"/>
</dbReference>
<dbReference type="PDB" id="5C5H">
    <property type="method" value="X-ray"/>
    <property type="resolution" value="2.40 A"/>
    <property type="chains" value="A/B=1-451"/>
</dbReference>
<dbReference type="PDB" id="6NJ0">
    <property type="method" value="X-ray"/>
    <property type="resolution" value="1.83 A"/>
    <property type="chains" value="A=1-451"/>
</dbReference>
<dbReference type="PDBsum" id="5C5H"/>
<dbReference type="PDBsum" id="6NJ0"/>
<dbReference type="SMR" id="P37353"/>
<dbReference type="BioGRID" id="4262001">
    <property type="interactions" value="20"/>
</dbReference>
<dbReference type="DIP" id="DIP-10186N"/>
<dbReference type="FunCoup" id="P37353">
    <property type="interactions" value="144"/>
</dbReference>
<dbReference type="IntAct" id="P37353">
    <property type="interactions" value="4"/>
</dbReference>
<dbReference type="STRING" id="511145.b2260"/>
<dbReference type="PaxDb" id="511145-b2260"/>
<dbReference type="EnsemblBacteria" id="AAC75320">
    <property type="protein sequence ID" value="AAC75320"/>
    <property type="gene ID" value="b2260"/>
</dbReference>
<dbReference type="GeneID" id="946741"/>
<dbReference type="KEGG" id="ecj:JW2255"/>
<dbReference type="KEGG" id="eco:b2260"/>
<dbReference type="KEGG" id="ecoc:C3026_12625"/>
<dbReference type="PATRIC" id="fig|1411691.4.peg.4476"/>
<dbReference type="EchoBASE" id="EB2332"/>
<dbReference type="eggNOG" id="COG0318">
    <property type="taxonomic scope" value="Bacteria"/>
</dbReference>
<dbReference type="HOGENOM" id="CLU_000022_59_0_6"/>
<dbReference type="InParanoid" id="P37353"/>
<dbReference type="OMA" id="IHTWETL"/>
<dbReference type="OrthoDB" id="9803968at2"/>
<dbReference type="PhylomeDB" id="P37353"/>
<dbReference type="BioCyc" id="EcoCyc:O-SUCCINYLBENZOATE-COA-LIG-MONOMER"/>
<dbReference type="BioCyc" id="MetaCyc:O-SUCCINYLBENZOATE-COA-LIG-MONOMER"/>
<dbReference type="UniPathway" id="UPA00079"/>
<dbReference type="UniPathway" id="UPA01057">
    <property type="reaction ID" value="UER00166"/>
</dbReference>
<dbReference type="PRO" id="PR:P37353"/>
<dbReference type="Proteomes" id="UP000000625">
    <property type="component" value="Chromosome"/>
</dbReference>
<dbReference type="GO" id="GO:0032991">
    <property type="term" value="C:protein-containing complex"/>
    <property type="evidence" value="ECO:0000314"/>
    <property type="project" value="EcoCyc"/>
</dbReference>
<dbReference type="GO" id="GO:0005524">
    <property type="term" value="F:ATP binding"/>
    <property type="evidence" value="ECO:0007669"/>
    <property type="project" value="UniProtKB-KW"/>
</dbReference>
<dbReference type="GO" id="GO:0042802">
    <property type="term" value="F:identical protein binding"/>
    <property type="evidence" value="ECO:0000314"/>
    <property type="project" value="EcoCyc"/>
</dbReference>
<dbReference type="GO" id="GO:0008756">
    <property type="term" value="F:o-succinylbenzoate-CoA ligase activity"/>
    <property type="evidence" value="ECO:0000314"/>
    <property type="project" value="EcoliWiki"/>
</dbReference>
<dbReference type="GO" id="GO:0009234">
    <property type="term" value="P:menaquinone biosynthetic process"/>
    <property type="evidence" value="ECO:0000315"/>
    <property type="project" value="EcoCyc"/>
</dbReference>
<dbReference type="CDD" id="cd17630">
    <property type="entry name" value="OSB_MenE-like"/>
    <property type="match status" value="1"/>
</dbReference>
<dbReference type="FunFam" id="3.30.300.30:FF:000027">
    <property type="entry name" value="2-succinylbenzoate--CoA ligase"/>
    <property type="match status" value="1"/>
</dbReference>
<dbReference type="FunFam" id="3.40.50.12780:FF:000034">
    <property type="entry name" value="2-succinylbenzoate--CoA ligase"/>
    <property type="match status" value="1"/>
</dbReference>
<dbReference type="Gene3D" id="3.30.300.30">
    <property type="match status" value="1"/>
</dbReference>
<dbReference type="Gene3D" id="3.40.50.12780">
    <property type="entry name" value="N-terminal domain of ligase-like"/>
    <property type="match status" value="1"/>
</dbReference>
<dbReference type="HAMAP" id="MF_00731">
    <property type="entry name" value="MenE"/>
    <property type="match status" value="1"/>
</dbReference>
<dbReference type="InterPro" id="IPR025110">
    <property type="entry name" value="AMP-bd_C"/>
</dbReference>
<dbReference type="InterPro" id="IPR045851">
    <property type="entry name" value="AMP-bd_C_sf"/>
</dbReference>
<dbReference type="InterPro" id="IPR020845">
    <property type="entry name" value="AMP-binding_CS"/>
</dbReference>
<dbReference type="InterPro" id="IPR000873">
    <property type="entry name" value="AMP-dep_synth/lig_dom"/>
</dbReference>
<dbReference type="InterPro" id="IPR042099">
    <property type="entry name" value="ANL_N_sf"/>
</dbReference>
<dbReference type="InterPro" id="IPR050237">
    <property type="entry name" value="ATP-dep_AMP-bd_enzyme"/>
</dbReference>
<dbReference type="InterPro" id="IPR010192">
    <property type="entry name" value="MenE"/>
</dbReference>
<dbReference type="NCBIfam" id="TIGR01923">
    <property type="entry name" value="menE"/>
    <property type="match status" value="1"/>
</dbReference>
<dbReference type="NCBIfam" id="NF006539">
    <property type="entry name" value="PRK09029.1"/>
    <property type="match status" value="1"/>
</dbReference>
<dbReference type="PANTHER" id="PTHR43767">
    <property type="entry name" value="LONG-CHAIN-FATTY-ACID--COA LIGASE"/>
    <property type="match status" value="1"/>
</dbReference>
<dbReference type="PANTHER" id="PTHR43767:SF1">
    <property type="entry name" value="NONRIBOSOMAL PEPTIDE SYNTHASE PES1 (EUROFUNG)-RELATED"/>
    <property type="match status" value="1"/>
</dbReference>
<dbReference type="Pfam" id="PF00501">
    <property type="entry name" value="AMP-binding"/>
    <property type="match status" value="1"/>
</dbReference>
<dbReference type="Pfam" id="PF13193">
    <property type="entry name" value="AMP-binding_C"/>
    <property type="match status" value="1"/>
</dbReference>
<dbReference type="SUPFAM" id="SSF56801">
    <property type="entry name" value="Acetyl-CoA synthetase-like"/>
    <property type="match status" value="1"/>
</dbReference>
<dbReference type="PROSITE" id="PS00455">
    <property type="entry name" value="AMP_BINDING"/>
    <property type="match status" value="1"/>
</dbReference>
<evidence type="ECO:0000255" key="1">
    <source>
        <dbReference type="HAMAP-Rule" id="MF_00731"/>
    </source>
</evidence>
<evidence type="ECO:0000269" key="2">
    <source>
    </source>
</evidence>
<evidence type="ECO:0000305" key="3"/>
<evidence type="ECO:0007829" key="4">
    <source>
        <dbReference type="PDB" id="5C5H"/>
    </source>
</evidence>
<evidence type="ECO:0007829" key="5">
    <source>
        <dbReference type="PDB" id="6NJ0"/>
    </source>
</evidence>
<protein>
    <recommendedName>
        <fullName evidence="1">2-succinylbenzoate--CoA ligase</fullName>
        <ecNumber evidence="1">6.2.1.26</ecNumber>
    </recommendedName>
    <alternativeName>
        <fullName evidence="1">o-succinylbenzoyl-CoA synthetase</fullName>
        <shortName evidence="1">OSB-CoA synthetase</shortName>
    </alternativeName>
</protein>
<name>MENE_ECOLI</name>
<organism>
    <name type="scientific">Escherichia coli (strain K12)</name>
    <dbReference type="NCBI Taxonomy" id="83333"/>
    <lineage>
        <taxon>Bacteria</taxon>
        <taxon>Pseudomonadati</taxon>
        <taxon>Pseudomonadota</taxon>
        <taxon>Gammaproteobacteria</taxon>
        <taxon>Enterobacterales</taxon>
        <taxon>Enterobacteriaceae</taxon>
        <taxon>Escherichia</taxon>
    </lineage>
</organism>
<feature type="chain" id="PRO_0000193175" description="2-succinylbenzoate--CoA ligase">
    <location>
        <begin position="1"/>
        <end position="451"/>
    </location>
</feature>
<feature type="sequence conflict" description="In Ref. 1; AAB04893." evidence="3" ref="1">
    <original>I</original>
    <variation>N</variation>
    <location>
        <position position="382"/>
    </location>
</feature>
<feature type="strand" evidence="4">
    <location>
        <begin position="4"/>
        <end position="6"/>
    </location>
</feature>
<feature type="helix" evidence="5">
    <location>
        <begin position="7"/>
        <end position="15"/>
    </location>
</feature>
<feature type="strand" evidence="5">
    <location>
        <begin position="18"/>
        <end position="23"/>
    </location>
</feature>
<feature type="strand" evidence="5">
    <location>
        <begin position="26"/>
        <end position="29"/>
    </location>
</feature>
<feature type="helix" evidence="5">
    <location>
        <begin position="30"/>
        <end position="46"/>
    </location>
</feature>
<feature type="strand" evidence="5">
    <location>
        <begin position="54"/>
        <end position="58"/>
    </location>
</feature>
<feature type="helix" evidence="5">
    <location>
        <begin position="63"/>
        <end position="74"/>
    </location>
</feature>
<feature type="strand" evidence="5">
    <location>
        <begin position="78"/>
        <end position="82"/>
    </location>
</feature>
<feature type="helix" evidence="5">
    <location>
        <begin position="88"/>
        <end position="94"/>
    </location>
</feature>
<feature type="helix" evidence="5">
    <location>
        <begin position="95"/>
        <end position="97"/>
    </location>
</feature>
<feature type="strand" evidence="5">
    <location>
        <begin position="102"/>
        <end position="104"/>
    </location>
</feature>
<feature type="strand" evidence="5">
    <location>
        <begin position="115"/>
        <end position="117"/>
    </location>
</feature>
<feature type="strand" evidence="5">
    <location>
        <begin position="135"/>
        <end position="141"/>
    </location>
</feature>
<feature type="strand" evidence="5">
    <location>
        <begin position="151"/>
        <end position="155"/>
    </location>
</feature>
<feature type="helix" evidence="5">
    <location>
        <begin position="156"/>
        <end position="169"/>
    </location>
</feature>
<feature type="strand" evidence="5">
    <location>
        <begin position="177"/>
        <end position="179"/>
    </location>
</feature>
<feature type="helix" evidence="5">
    <location>
        <begin position="187"/>
        <end position="199"/>
    </location>
</feature>
<feature type="strand" evidence="5">
    <location>
        <begin position="202"/>
        <end position="205"/>
    </location>
</feature>
<feature type="helix" evidence="5">
    <location>
        <begin position="211"/>
        <end position="214"/>
    </location>
</feature>
<feature type="turn" evidence="5">
    <location>
        <begin position="215"/>
        <end position="217"/>
    </location>
</feature>
<feature type="strand" evidence="5">
    <location>
        <begin position="219"/>
        <end position="223"/>
    </location>
</feature>
<feature type="helix" evidence="5">
    <location>
        <begin position="225"/>
        <end position="233"/>
    </location>
</feature>
<feature type="strand" evidence="5">
    <location>
        <begin position="241"/>
        <end position="245"/>
    </location>
</feature>
<feature type="helix" evidence="5">
    <location>
        <begin position="252"/>
        <end position="260"/>
    </location>
</feature>
<feature type="strand" evidence="5">
    <location>
        <begin position="265"/>
        <end position="271"/>
    </location>
</feature>
<feature type="helix" evidence="5">
    <location>
        <begin position="272"/>
        <end position="274"/>
    </location>
</feature>
<feature type="strand" evidence="5">
    <location>
        <begin position="276"/>
        <end position="282"/>
    </location>
</feature>
<feature type="strand" evidence="5">
    <location>
        <begin position="297"/>
        <end position="301"/>
    </location>
</feature>
<feature type="strand" evidence="5">
    <location>
        <begin position="304"/>
        <end position="308"/>
    </location>
</feature>
<feature type="strand" evidence="5">
    <location>
        <begin position="314"/>
        <end position="318"/>
    </location>
</feature>
<feature type="strand" evidence="5">
    <location>
        <begin position="321"/>
        <end position="323"/>
    </location>
</feature>
<feature type="strand" evidence="5">
    <location>
        <begin position="332"/>
        <end position="341"/>
    </location>
</feature>
<feature type="strand" evidence="5">
    <location>
        <begin position="344"/>
        <end position="350"/>
    </location>
</feature>
<feature type="helix" evidence="5">
    <location>
        <begin position="351"/>
        <end position="353"/>
    </location>
</feature>
<feature type="strand" evidence="5">
    <location>
        <begin position="355"/>
        <end position="357"/>
    </location>
</feature>
<feature type="strand" evidence="5">
    <location>
        <begin position="360"/>
        <end position="362"/>
    </location>
</feature>
<feature type="helix" evidence="5">
    <location>
        <begin position="364"/>
        <end position="372"/>
    </location>
</feature>
<feature type="strand" evidence="5">
    <location>
        <begin position="377"/>
        <end position="387"/>
    </location>
</feature>
<feature type="strand" evidence="5">
    <location>
        <begin position="391"/>
        <end position="403"/>
    </location>
</feature>
<feature type="helix" evidence="5">
    <location>
        <begin position="410"/>
        <end position="413"/>
    </location>
</feature>
<feature type="helix" evidence="5">
    <location>
        <begin position="417"/>
        <end position="419"/>
    </location>
</feature>
<feature type="strand" evidence="5">
    <location>
        <begin position="424"/>
        <end position="426"/>
    </location>
</feature>
<feature type="helix" evidence="5">
    <location>
        <begin position="429"/>
        <end position="431"/>
    </location>
</feature>
<feature type="helix" evidence="5">
    <location>
        <begin position="440"/>
        <end position="448"/>
    </location>
</feature>
<reference key="1">
    <citation type="journal article" date="1996" name="Gene">
        <title>Menaquinone (vitamin K2) biosynthesis: localization and characterization of the menE gene from Escherichia coli.</title>
        <authorList>
            <person name="Sharma V."/>
            <person name="Hudspeth M.E.S."/>
            <person name="Meganathan R."/>
        </authorList>
    </citation>
    <scope>NUCLEOTIDE SEQUENCE [GENOMIC DNA]</scope>
    <scope>FUNCTION AS AN O-SUCCINYLBENZOYL-COA SYNTHASE</scope>
    <source>
        <strain>K12</strain>
    </source>
</reference>
<reference key="2">
    <citation type="journal article" date="1997" name="DNA Res.">
        <title>Construction of a contiguous 874-kb sequence of the Escherichia coli-K12 genome corresponding to 50.0-68.8 min on the linkage map and analysis of its sequence features.</title>
        <authorList>
            <person name="Yamamoto Y."/>
            <person name="Aiba H."/>
            <person name="Baba T."/>
            <person name="Hayashi K."/>
            <person name="Inada T."/>
            <person name="Isono K."/>
            <person name="Itoh T."/>
            <person name="Kimura S."/>
            <person name="Kitagawa M."/>
            <person name="Makino K."/>
            <person name="Miki T."/>
            <person name="Mitsuhashi N."/>
            <person name="Mizobuchi K."/>
            <person name="Mori H."/>
            <person name="Nakade S."/>
            <person name="Nakamura Y."/>
            <person name="Nashimoto H."/>
            <person name="Oshima T."/>
            <person name="Oyama S."/>
            <person name="Saito N."/>
            <person name="Sampei G."/>
            <person name="Satoh Y."/>
            <person name="Sivasundaram S."/>
            <person name="Tagami H."/>
            <person name="Takahashi H."/>
            <person name="Takeda J."/>
            <person name="Takemoto K."/>
            <person name="Uehara K."/>
            <person name="Wada C."/>
            <person name="Yamagata S."/>
            <person name="Horiuchi T."/>
        </authorList>
    </citation>
    <scope>NUCLEOTIDE SEQUENCE [LARGE SCALE GENOMIC DNA]</scope>
    <source>
        <strain>K12 / W3110 / ATCC 27325 / DSM 5911</strain>
    </source>
</reference>
<reference key="3">
    <citation type="journal article" date="1997" name="Science">
        <title>The complete genome sequence of Escherichia coli K-12.</title>
        <authorList>
            <person name="Blattner F.R."/>
            <person name="Plunkett G. III"/>
            <person name="Bloch C.A."/>
            <person name="Perna N.T."/>
            <person name="Burland V."/>
            <person name="Riley M."/>
            <person name="Collado-Vides J."/>
            <person name="Glasner J.D."/>
            <person name="Rode C.K."/>
            <person name="Mayhew G.F."/>
            <person name="Gregor J."/>
            <person name="Davis N.W."/>
            <person name="Kirkpatrick H.A."/>
            <person name="Goeden M.A."/>
            <person name="Rose D.J."/>
            <person name="Mau B."/>
            <person name="Shao Y."/>
        </authorList>
    </citation>
    <scope>NUCLEOTIDE SEQUENCE [LARGE SCALE GENOMIC DNA]</scope>
    <source>
        <strain>K12 / MG1655 / ATCC 47076</strain>
    </source>
</reference>
<reference key="4">
    <citation type="journal article" date="2006" name="Mol. Syst. Biol.">
        <title>Highly accurate genome sequences of Escherichia coli K-12 strains MG1655 and W3110.</title>
        <authorList>
            <person name="Hayashi K."/>
            <person name="Morooka N."/>
            <person name="Yamamoto Y."/>
            <person name="Fujita K."/>
            <person name="Isono K."/>
            <person name="Choi S."/>
            <person name="Ohtsubo E."/>
            <person name="Baba T."/>
            <person name="Wanner B.L."/>
            <person name="Mori H."/>
            <person name="Horiuchi T."/>
        </authorList>
    </citation>
    <scope>NUCLEOTIDE SEQUENCE [LARGE SCALE GENOMIC DNA]</scope>
    <source>
        <strain>K12 / W3110 / ATCC 27325 / DSM 5911</strain>
    </source>
</reference>
<accession>P37353</accession>
<accession>P78178</accession>
<accession>P78253</accession>
<comment type="function">
    <text evidence="1 2">Converts 2-succinylbenzoate (OSB) to 2-succinylbenzoyl-CoA (OSB-CoA).</text>
</comment>
<comment type="catalytic activity">
    <reaction evidence="1">
        <text>2-succinylbenzoate + ATP + CoA = 2-succinylbenzoyl-CoA + AMP + diphosphate</text>
        <dbReference type="Rhea" id="RHEA:17009"/>
        <dbReference type="ChEBI" id="CHEBI:18325"/>
        <dbReference type="ChEBI" id="CHEBI:30616"/>
        <dbReference type="ChEBI" id="CHEBI:33019"/>
        <dbReference type="ChEBI" id="CHEBI:57287"/>
        <dbReference type="ChEBI" id="CHEBI:57364"/>
        <dbReference type="ChEBI" id="CHEBI:456215"/>
        <dbReference type="EC" id="6.2.1.26"/>
    </reaction>
</comment>
<comment type="pathway">
    <text evidence="1">Quinol/quinone metabolism; 1,4-dihydroxy-2-naphthoate biosynthesis; 1,4-dihydroxy-2-naphthoate from chorismate: step 5/7.</text>
</comment>
<comment type="pathway">
    <text evidence="1">Quinol/quinone metabolism; menaquinone biosynthesis.</text>
</comment>
<comment type="similarity">
    <text evidence="1 3">Belongs to the ATP-dependent AMP-binding enzyme family. MenE subfamily.</text>
</comment>
<keyword id="KW-0002">3D-structure</keyword>
<keyword id="KW-0067">ATP-binding</keyword>
<keyword id="KW-0436">Ligase</keyword>
<keyword id="KW-0474">Menaquinone biosynthesis</keyword>
<keyword id="KW-0547">Nucleotide-binding</keyword>
<keyword id="KW-1185">Reference proteome</keyword>